<keyword id="KW-0068">Autocatalytic cleavage</keyword>
<keyword id="KW-0963">Cytoplasm</keyword>
<keyword id="KW-0210">Decarboxylase</keyword>
<keyword id="KW-0456">Lyase</keyword>
<keyword id="KW-0566">Pantothenate biosynthesis</keyword>
<keyword id="KW-0670">Pyruvate</keyword>
<keyword id="KW-0704">Schiff base</keyword>
<keyword id="KW-0865">Zymogen</keyword>
<protein>
    <recommendedName>
        <fullName evidence="1">Aspartate 1-decarboxylase</fullName>
        <ecNumber evidence="1">4.1.1.11</ecNumber>
    </recommendedName>
    <alternativeName>
        <fullName evidence="1">Aspartate alpha-decarboxylase</fullName>
    </alternativeName>
    <component>
        <recommendedName>
            <fullName evidence="1">Aspartate 1-decarboxylase beta chain</fullName>
        </recommendedName>
    </component>
    <component>
        <recommendedName>
            <fullName evidence="1">Aspartate 1-decarboxylase alpha chain</fullName>
        </recommendedName>
    </component>
</protein>
<dbReference type="EC" id="4.1.1.11" evidence="1"/>
<dbReference type="EMBL" id="BA000017">
    <property type="protein sequence ID" value="BAB58759.1"/>
    <property type="status" value="ALT_INIT"/>
    <property type="molecule type" value="Genomic_DNA"/>
</dbReference>
<dbReference type="RefSeq" id="WP_000621532.1">
    <property type="nucleotide sequence ID" value="NC_002758.2"/>
</dbReference>
<dbReference type="SMR" id="P65664"/>
<dbReference type="GeneID" id="98346911"/>
<dbReference type="KEGG" id="sav:SAV2597"/>
<dbReference type="HOGENOM" id="CLU_115305_2_0_9"/>
<dbReference type="UniPathway" id="UPA00028">
    <property type="reaction ID" value="UER00002"/>
</dbReference>
<dbReference type="Proteomes" id="UP000002481">
    <property type="component" value="Chromosome"/>
</dbReference>
<dbReference type="GO" id="GO:0005829">
    <property type="term" value="C:cytosol"/>
    <property type="evidence" value="ECO:0007669"/>
    <property type="project" value="TreeGrafter"/>
</dbReference>
<dbReference type="GO" id="GO:0004068">
    <property type="term" value="F:aspartate 1-decarboxylase activity"/>
    <property type="evidence" value="ECO:0007669"/>
    <property type="project" value="UniProtKB-UniRule"/>
</dbReference>
<dbReference type="GO" id="GO:0006523">
    <property type="term" value="P:alanine biosynthetic process"/>
    <property type="evidence" value="ECO:0007669"/>
    <property type="project" value="InterPro"/>
</dbReference>
<dbReference type="GO" id="GO:0015940">
    <property type="term" value="P:pantothenate biosynthetic process"/>
    <property type="evidence" value="ECO:0007669"/>
    <property type="project" value="UniProtKB-UniRule"/>
</dbReference>
<dbReference type="CDD" id="cd06919">
    <property type="entry name" value="Asp_decarbox"/>
    <property type="match status" value="1"/>
</dbReference>
<dbReference type="Gene3D" id="2.40.40.20">
    <property type="match status" value="1"/>
</dbReference>
<dbReference type="HAMAP" id="MF_00446">
    <property type="entry name" value="PanD"/>
    <property type="match status" value="1"/>
</dbReference>
<dbReference type="InterPro" id="IPR009010">
    <property type="entry name" value="Asp_de-COase-like_dom_sf"/>
</dbReference>
<dbReference type="InterPro" id="IPR003190">
    <property type="entry name" value="Asp_decarbox"/>
</dbReference>
<dbReference type="NCBIfam" id="TIGR00223">
    <property type="entry name" value="panD"/>
    <property type="match status" value="1"/>
</dbReference>
<dbReference type="PANTHER" id="PTHR21012">
    <property type="entry name" value="ASPARTATE 1-DECARBOXYLASE"/>
    <property type="match status" value="1"/>
</dbReference>
<dbReference type="PANTHER" id="PTHR21012:SF0">
    <property type="entry name" value="ASPARTATE 1-DECARBOXYLASE"/>
    <property type="match status" value="1"/>
</dbReference>
<dbReference type="Pfam" id="PF02261">
    <property type="entry name" value="Asp_decarbox"/>
    <property type="match status" value="1"/>
</dbReference>
<dbReference type="PIRSF" id="PIRSF006246">
    <property type="entry name" value="Asp_decarbox"/>
    <property type="match status" value="1"/>
</dbReference>
<dbReference type="SUPFAM" id="SSF50692">
    <property type="entry name" value="ADC-like"/>
    <property type="match status" value="1"/>
</dbReference>
<reference key="1">
    <citation type="journal article" date="2001" name="Lancet">
        <title>Whole genome sequencing of meticillin-resistant Staphylococcus aureus.</title>
        <authorList>
            <person name="Kuroda M."/>
            <person name="Ohta T."/>
            <person name="Uchiyama I."/>
            <person name="Baba T."/>
            <person name="Yuzawa H."/>
            <person name="Kobayashi I."/>
            <person name="Cui L."/>
            <person name="Oguchi A."/>
            <person name="Aoki K."/>
            <person name="Nagai Y."/>
            <person name="Lian J.-Q."/>
            <person name="Ito T."/>
            <person name="Kanamori M."/>
            <person name="Matsumaru H."/>
            <person name="Maruyama A."/>
            <person name="Murakami H."/>
            <person name="Hosoyama A."/>
            <person name="Mizutani-Ui Y."/>
            <person name="Takahashi N.K."/>
            <person name="Sawano T."/>
            <person name="Inoue R."/>
            <person name="Kaito C."/>
            <person name="Sekimizu K."/>
            <person name="Hirakawa H."/>
            <person name="Kuhara S."/>
            <person name="Goto S."/>
            <person name="Yabuzaki J."/>
            <person name="Kanehisa M."/>
            <person name="Yamashita A."/>
            <person name="Oshima K."/>
            <person name="Furuya K."/>
            <person name="Yoshino C."/>
            <person name="Shiba T."/>
            <person name="Hattori M."/>
            <person name="Ogasawara N."/>
            <person name="Hayashi H."/>
            <person name="Hiramatsu K."/>
        </authorList>
    </citation>
    <scope>NUCLEOTIDE SEQUENCE [LARGE SCALE GENOMIC DNA]</scope>
    <source>
        <strain>Mu50 / ATCC 700699</strain>
    </source>
</reference>
<comment type="function">
    <text evidence="1">Catalyzes the pyruvoyl-dependent decarboxylation of aspartate to produce beta-alanine.</text>
</comment>
<comment type="catalytic activity">
    <reaction evidence="1">
        <text>L-aspartate + H(+) = beta-alanine + CO2</text>
        <dbReference type="Rhea" id="RHEA:19497"/>
        <dbReference type="ChEBI" id="CHEBI:15378"/>
        <dbReference type="ChEBI" id="CHEBI:16526"/>
        <dbReference type="ChEBI" id="CHEBI:29991"/>
        <dbReference type="ChEBI" id="CHEBI:57966"/>
        <dbReference type="EC" id="4.1.1.11"/>
    </reaction>
</comment>
<comment type="cofactor">
    <cofactor evidence="1">
        <name>pyruvate</name>
        <dbReference type="ChEBI" id="CHEBI:15361"/>
    </cofactor>
    <text evidence="1">Binds 1 pyruvoyl group covalently per subunit.</text>
</comment>
<comment type="pathway">
    <text evidence="1">Cofactor biosynthesis; (R)-pantothenate biosynthesis; beta-alanine from L-aspartate: step 1/1.</text>
</comment>
<comment type="subunit">
    <text evidence="1">Heterooctamer of four alpha and four beta subunits.</text>
</comment>
<comment type="subcellular location">
    <subcellularLocation>
        <location evidence="1">Cytoplasm</location>
    </subcellularLocation>
</comment>
<comment type="PTM">
    <text evidence="1">Is synthesized initially as an inactive proenzyme, which is activated by self-cleavage at a specific serine bond to produce a beta-subunit with a hydroxyl group at its C-terminus and an alpha-subunit with a pyruvoyl group at its N-terminus.</text>
</comment>
<comment type="similarity">
    <text evidence="1">Belongs to the PanD family.</text>
</comment>
<comment type="sequence caution" evidence="2">
    <conflict type="erroneous initiation">
        <sequence resource="EMBL-CDS" id="BAB58759"/>
    </conflict>
</comment>
<organism>
    <name type="scientific">Staphylococcus aureus (strain Mu50 / ATCC 700699)</name>
    <dbReference type="NCBI Taxonomy" id="158878"/>
    <lineage>
        <taxon>Bacteria</taxon>
        <taxon>Bacillati</taxon>
        <taxon>Bacillota</taxon>
        <taxon>Bacilli</taxon>
        <taxon>Bacillales</taxon>
        <taxon>Staphylococcaceae</taxon>
        <taxon>Staphylococcus</taxon>
    </lineage>
</organism>
<feature type="chain" id="PRO_0000023159" description="Aspartate 1-decarboxylase beta chain" evidence="1">
    <location>
        <begin position="1"/>
        <end position="24"/>
    </location>
</feature>
<feature type="chain" id="PRO_0000023160" description="Aspartate 1-decarboxylase alpha chain" evidence="1">
    <location>
        <begin position="25"/>
        <end position="127"/>
    </location>
</feature>
<feature type="active site" description="Schiff-base intermediate with substrate; via pyruvic acid" evidence="1">
    <location>
        <position position="25"/>
    </location>
</feature>
<feature type="active site" description="Proton donor" evidence="1">
    <location>
        <position position="58"/>
    </location>
</feature>
<feature type="binding site" evidence="1">
    <location>
        <position position="57"/>
    </location>
    <ligand>
        <name>substrate</name>
    </ligand>
</feature>
<feature type="binding site" evidence="1">
    <location>
        <begin position="73"/>
        <end position="75"/>
    </location>
    <ligand>
        <name>substrate</name>
    </ligand>
</feature>
<feature type="modified residue" description="Pyruvic acid (Ser)" evidence="1">
    <location>
        <position position="25"/>
    </location>
</feature>
<accession>P65664</accession>
<accession>Q99R40</accession>
<gene>
    <name evidence="1" type="primary">panD</name>
    <name type="ordered locus">SAV2597</name>
</gene>
<sequence>MIRTMMNAKIHRARVTESNLNYVGSITIDSDILEAVDILPNEKVAIVNNNNGARFETYVIAGERGSGKICLNGAASRLVEVGDVVIIMTYAQLNEEEIKNHAPKVAVMNEDNVIIEMIHEKENTIVL</sequence>
<proteinExistence type="inferred from homology"/>
<evidence type="ECO:0000255" key="1">
    <source>
        <dbReference type="HAMAP-Rule" id="MF_00446"/>
    </source>
</evidence>
<evidence type="ECO:0000305" key="2"/>
<name>PAND_STAAM</name>